<keyword id="KW-1185">Reference proteome</keyword>
<protein>
    <recommendedName>
        <fullName evidence="1">UPF0434 protein Nwi_0075</fullName>
    </recommendedName>
</protein>
<comment type="similarity">
    <text evidence="1">Belongs to the UPF0434 family.</text>
</comment>
<name>Y075_NITWN</name>
<dbReference type="EMBL" id="CP000115">
    <property type="protein sequence ID" value="ABA03343.1"/>
    <property type="molecule type" value="Genomic_DNA"/>
</dbReference>
<dbReference type="RefSeq" id="WP_011313412.1">
    <property type="nucleotide sequence ID" value="NC_007406.1"/>
</dbReference>
<dbReference type="SMR" id="Q3SWJ8"/>
<dbReference type="STRING" id="323098.Nwi_0075"/>
<dbReference type="KEGG" id="nwi:Nwi_0075"/>
<dbReference type="eggNOG" id="COG2835">
    <property type="taxonomic scope" value="Bacteria"/>
</dbReference>
<dbReference type="HOGENOM" id="CLU_155659_2_0_5"/>
<dbReference type="OrthoDB" id="9812205at2"/>
<dbReference type="Proteomes" id="UP000002531">
    <property type="component" value="Chromosome"/>
</dbReference>
<dbReference type="GO" id="GO:0005829">
    <property type="term" value="C:cytosol"/>
    <property type="evidence" value="ECO:0007669"/>
    <property type="project" value="TreeGrafter"/>
</dbReference>
<dbReference type="FunFam" id="2.20.25.10:FF:000002">
    <property type="entry name" value="UPF0434 protein YcaR"/>
    <property type="match status" value="1"/>
</dbReference>
<dbReference type="Gene3D" id="2.20.25.10">
    <property type="match status" value="1"/>
</dbReference>
<dbReference type="HAMAP" id="MF_01187">
    <property type="entry name" value="UPF0434"/>
    <property type="match status" value="1"/>
</dbReference>
<dbReference type="InterPro" id="IPR005651">
    <property type="entry name" value="Trm112-like"/>
</dbReference>
<dbReference type="PANTHER" id="PTHR33505:SF4">
    <property type="entry name" value="PROTEIN PREY, MITOCHONDRIAL"/>
    <property type="match status" value="1"/>
</dbReference>
<dbReference type="PANTHER" id="PTHR33505">
    <property type="entry name" value="ZGC:162634"/>
    <property type="match status" value="1"/>
</dbReference>
<dbReference type="Pfam" id="PF03966">
    <property type="entry name" value="Trm112p"/>
    <property type="match status" value="1"/>
</dbReference>
<dbReference type="SUPFAM" id="SSF158997">
    <property type="entry name" value="Trm112p-like"/>
    <property type="match status" value="1"/>
</dbReference>
<evidence type="ECO:0000255" key="1">
    <source>
        <dbReference type="HAMAP-Rule" id="MF_01187"/>
    </source>
</evidence>
<gene>
    <name type="ordered locus">Nwi_0075</name>
</gene>
<sequence>MTPPHSDRPEDTADPKLLEILVCPVTKGPLELDGARRELISRSAKLAYPIRDGIPIMLPEEARKIE</sequence>
<organism>
    <name type="scientific">Nitrobacter winogradskyi (strain ATCC 25391 / DSM 10237 / CIP 104748 / NCIMB 11846 / Nb-255)</name>
    <dbReference type="NCBI Taxonomy" id="323098"/>
    <lineage>
        <taxon>Bacteria</taxon>
        <taxon>Pseudomonadati</taxon>
        <taxon>Pseudomonadota</taxon>
        <taxon>Alphaproteobacteria</taxon>
        <taxon>Hyphomicrobiales</taxon>
        <taxon>Nitrobacteraceae</taxon>
        <taxon>Nitrobacter</taxon>
    </lineage>
</organism>
<accession>Q3SWJ8</accession>
<reference key="1">
    <citation type="journal article" date="2006" name="Appl. Environ. Microbiol.">
        <title>Genome sequence of the chemolithoautotrophic nitrite-oxidizing bacterium Nitrobacter winogradskyi Nb-255.</title>
        <authorList>
            <person name="Starkenburg S.R."/>
            <person name="Chain P.S.G."/>
            <person name="Sayavedra-Soto L.A."/>
            <person name="Hauser L."/>
            <person name="Land M.L."/>
            <person name="Larimer F.W."/>
            <person name="Malfatti S.A."/>
            <person name="Klotz M.G."/>
            <person name="Bottomley P.J."/>
            <person name="Arp D.J."/>
            <person name="Hickey W.J."/>
        </authorList>
    </citation>
    <scope>NUCLEOTIDE SEQUENCE [LARGE SCALE GENOMIC DNA]</scope>
    <source>
        <strain>ATCC 25391 / DSM 10237 / CIP 104748 / NCIMB 11846 / Nb-255</strain>
    </source>
</reference>
<proteinExistence type="inferred from homology"/>
<feature type="chain" id="PRO_0000291120" description="UPF0434 protein Nwi_0075">
    <location>
        <begin position="1"/>
        <end position="66"/>
    </location>
</feature>